<proteinExistence type="inferred from homology"/>
<comment type="catalytic activity">
    <reaction>
        <text>Hydrolysis of terminal, non-reducing alpha-D-galactose residues in alpha-D-galactosides, including galactose oligosaccharides, galactomannans and galactolipids.</text>
        <dbReference type="EC" id="3.2.1.22"/>
    </reaction>
</comment>
<comment type="cofactor">
    <cofactor evidence="1">
        <name>Ca(2+)</name>
        <dbReference type="ChEBI" id="CHEBI:29108"/>
    </cofactor>
    <text evidence="1">Binds 1 Ca(2+) ion per subunit.</text>
</comment>
<comment type="similarity">
    <text evidence="3">Belongs to the glycosyl hydrolase 97 family.</text>
</comment>
<keyword id="KW-0106">Calcium</keyword>
<keyword id="KW-0119">Carbohydrate metabolism</keyword>
<keyword id="KW-0326">Glycosidase</keyword>
<keyword id="KW-0378">Hydrolase</keyword>
<keyword id="KW-0479">Metal-binding</keyword>
<keyword id="KW-1185">Reference proteome</keyword>
<keyword id="KW-0732">Signal</keyword>
<sequence length="635" mass="69484">MARSVRRTTLALLLSAVLAMTLFVTAPAHAQDSTWTVSGPSARSGPQARLQLDATTGALTLQVSRGGRTVLEPSPLGIRTEGADLSRGLRLSGRERRVVAERYRTAVGKQRSRDVRMTETRFRFRGDGGARFDLVVRVSDDGVAYRYVLPKGSGDVLGETSAFTLPTDATAWLGAYRRDNENLFNQYPAATAPTGEYMAQALFETRGTYALIAESDLSGRYSAARLIHEAGLPTYRIGLWDERVTSDGALSTPWRALVVGDLATVTESTFTDDLAPASRVADTSWIRPGPALWTWLAGGKPAGQSLSMQKGYVDYAAQRGWPYVVVDAGWYFDPDQWDVTDPDWQTNSWIPELVTYARERGVGIQVWIHHRDLDTAEEREQWLPTLERWGVKGVKIDFMDSESQDTLRWYDEILPATAAHHLLVNFHGSTIPKGIQRTWPHVMTMEGVNGEEKRVNTAQHLTTLPFTRNVIGSMDFTPGAFHRPQRPNAASDAGELGLSVLYESGIQNLAGTPESYDARPLARGFLEQLPAAWDRTRLLAGRPGESAVLARASGGRWFIGGTFAGAAHTAEVPLRLGSGTWLVDLVLDGPDGLVREPRVVRGGDTLSVPVVADGGFAAIACHWRPGRTSCDRTAA</sequence>
<gene>
    <name type="ordered locus">SBI_01652</name>
</gene>
<name>AGAL_STRBB</name>
<accession>D7CFN7</accession>
<dbReference type="EC" id="3.2.1.22"/>
<dbReference type="EMBL" id="CP002047">
    <property type="protein sequence ID" value="ADI04773.1"/>
    <property type="molecule type" value="Genomic_DNA"/>
</dbReference>
<dbReference type="RefSeq" id="WP_014174252.1">
    <property type="nucleotide sequence ID" value="NC_016582.1"/>
</dbReference>
<dbReference type="SMR" id="D7CFN7"/>
<dbReference type="STRING" id="749414.SBI_01652"/>
<dbReference type="CAZy" id="GH97">
    <property type="family name" value="Glycoside Hydrolase Family 97"/>
</dbReference>
<dbReference type="KEGG" id="sbh:SBI_01652"/>
<dbReference type="PATRIC" id="fig|749414.3.peg.1705"/>
<dbReference type="eggNOG" id="COG1082">
    <property type="taxonomic scope" value="Bacteria"/>
</dbReference>
<dbReference type="HOGENOM" id="CLU_011166_1_1_11"/>
<dbReference type="Proteomes" id="UP000000377">
    <property type="component" value="Chromosome"/>
</dbReference>
<dbReference type="GO" id="GO:0004557">
    <property type="term" value="F:alpha-galactosidase activity"/>
    <property type="evidence" value="ECO:0007669"/>
    <property type="project" value="UniProtKB-EC"/>
</dbReference>
<dbReference type="GO" id="GO:0030246">
    <property type="term" value="F:carbohydrate binding"/>
    <property type="evidence" value="ECO:0007669"/>
    <property type="project" value="InterPro"/>
</dbReference>
<dbReference type="GO" id="GO:0046872">
    <property type="term" value="F:metal ion binding"/>
    <property type="evidence" value="ECO:0007669"/>
    <property type="project" value="UniProtKB-KW"/>
</dbReference>
<dbReference type="Gene3D" id="2.70.98.10">
    <property type="match status" value="1"/>
</dbReference>
<dbReference type="Gene3D" id="3.20.20.70">
    <property type="entry name" value="Aldolase class I"/>
    <property type="match status" value="1"/>
</dbReference>
<dbReference type="Gene3D" id="2.60.40.1180">
    <property type="entry name" value="Golgi alpha-mannosidase II"/>
    <property type="match status" value="1"/>
</dbReference>
<dbReference type="InterPro" id="IPR013785">
    <property type="entry name" value="Aldolase_TIM"/>
</dbReference>
<dbReference type="InterPro" id="IPR014718">
    <property type="entry name" value="GH-type_carb-bd"/>
</dbReference>
<dbReference type="InterPro" id="IPR029483">
    <property type="entry name" value="GH97_C"/>
</dbReference>
<dbReference type="InterPro" id="IPR019563">
    <property type="entry name" value="GH97_catalytic"/>
</dbReference>
<dbReference type="InterPro" id="IPR029486">
    <property type="entry name" value="GH97_N"/>
</dbReference>
<dbReference type="InterPro" id="IPR013780">
    <property type="entry name" value="Glyco_hydro_b"/>
</dbReference>
<dbReference type="InterPro" id="IPR017853">
    <property type="entry name" value="Glycoside_hydrolase_SF"/>
</dbReference>
<dbReference type="InterPro" id="IPR052720">
    <property type="entry name" value="Glycosyl_hydrolase_97"/>
</dbReference>
<dbReference type="PANTHER" id="PTHR35803">
    <property type="entry name" value="GLUCAN 1,4-ALPHA-GLUCOSIDASE SUSB-RELATED"/>
    <property type="match status" value="1"/>
</dbReference>
<dbReference type="PANTHER" id="PTHR35803:SF2">
    <property type="entry name" value="RETAINING ALPHA-GALACTOSIDASE"/>
    <property type="match status" value="1"/>
</dbReference>
<dbReference type="Pfam" id="PF14509">
    <property type="entry name" value="GH97_C"/>
    <property type="match status" value="1"/>
</dbReference>
<dbReference type="Pfam" id="PF14508">
    <property type="entry name" value="GH97_N"/>
    <property type="match status" value="1"/>
</dbReference>
<dbReference type="Pfam" id="PF10566">
    <property type="entry name" value="Glyco_hydro_97"/>
    <property type="match status" value="1"/>
</dbReference>
<dbReference type="SUPFAM" id="SSF51445">
    <property type="entry name" value="(Trans)glycosidases"/>
    <property type="match status" value="1"/>
</dbReference>
<protein>
    <recommendedName>
        <fullName>Probable retaining alpha-galactosidase</fullName>
        <ecNumber>3.2.1.22</ecNumber>
    </recommendedName>
    <alternativeName>
        <fullName>Melibiase</fullName>
    </alternativeName>
</protein>
<evidence type="ECO:0000250" key="1"/>
<evidence type="ECO:0000255" key="2"/>
<evidence type="ECO:0000305" key="3"/>
<feature type="signal peptide" evidence="2">
    <location>
        <begin position="1"/>
        <end position="30"/>
    </location>
</feature>
<feature type="chain" id="PRO_0000415273" description="Probable retaining alpha-galactosidase">
    <location>
        <begin position="31"/>
        <end position="635"/>
    </location>
</feature>
<feature type="active site" description="Nucleophile" evidence="1">
    <location>
        <position position="397"/>
    </location>
</feature>
<feature type="active site" description="Proton donor/acceptor" evidence="1">
    <location>
        <position position="452"/>
    </location>
</feature>
<feature type="binding site" evidence="1">
    <location>
        <position position="179"/>
    </location>
    <ligand>
        <name>Ca(2+)</name>
        <dbReference type="ChEBI" id="CHEBI:29108"/>
    </ligand>
</feature>
<feature type="binding site" evidence="1">
    <location>
        <position position="446"/>
    </location>
    <ligand>
        <name>Ca(2+)</name>
        <dbReference type="ChEBI" id="CHEBI:29108"/>
    </ligand>
</feature>
<feature type="binding site" evidence="1">
    <location>
        <position position="452"/>
    </location>
    <ligand>
        <name>Ca(2+)</name>
        <dbReference type="ChEBI" id="CHEBI:29108"/>
    </ligand>
</feature>
<reference key="1">
    <citation type="journal article" date="2010" name="J. Bacteriol.">
        <title>Genome sequence of the milbemycin-producing bacterium Streptomyces bingchenggensis.</title>
        <authorList>
            <person name="Wang X.J."/>
            <person name="Yan Y.J."/>
            <person name="Zhang B."/>
            <person name="An J."/>
            <person name="Wang J.J."/>
            <person name="Tian J."/>
            <person name="Jiang L."/>
            <person name="Chen Y.H."/>
            <person name="Huang S.X."/>
            <person name="Yin M."/>
            <person name="Zhang J."/>
            <person name="Gao A.L."/>
            <person name="Liu C.X."/>
            <person name="Zhu Z.X."/>
            <person name="Xiang W.S."/>
        </authorList>
    </citation>
    <scope>NUCLEOTIDE SEQUENCE [LARGE SCALE GENOMIC DNA]</scope>
    <source>
        <strain>BCW-1</strain>
    </source>
</reference>
<organism>
    <name type="scientific">Streptomyces bingchenggensis (strain BCW-1)</name>
    <dbReference type="NCBI Taxonomy" id="749414"/>
    <lineage>
        <taxon>Bacteria</taxon>
        <taxon>Bacillati</taxon>
        <taxon>Actinomycetota</taxon>
        <taxon>Actinomycetes</taxon>
        <taxon>Kitasatosporales</taxon>
        <taxon>Streptomycetaceae</taxon>
        <taxon>Streptomyces</taxon>
    </lineage>
</organism>